<reference key="1">
    <citation type="journal article" date="2000" name="Nucleic Acids Res.">
        <title>Complete genome sequence of the alkaliphilic bacterium Bacillus halodurans and genomic sequence comparison with Bacillus subtilis.</title>
        <authorList>
            <person name="Takami H."/>
            <person name="Nakasone K."/>
            <person name="Takaki Y."/>
            <person name="Maeno G."/>
            <person name="Sasaki R."/>
            <person name="Masui N."/>
            <person name="Fuji F."/>
            <person name="Hirama C."/>
            <person name="Nakamura Y."/>
            <person name="Ogasawara N."/>
            <person name="Kuhara S."/>
            <person name="Horikoshi K."/>
        </authorList>
    </citation>
    <scope>NUCLEOTIDE SEQUENCE [LARGE SCALE GENOMIC DNA]</scope>
    <source>
        <strain>ATCC BAA-125 / DSM 18197 / FERM 7344 / JCM 9153 / C-125</strain>
    </source>
</reference>
<reference key="2">
    <citation type="submission" date="1999-08" db="EMBL/GenBank/DDBJ databases">
        <title>Structural and comparative analysis of rrn operons in alkaliphilic Bacillus halodurans strain C-125 chromosome.</title>
        <authorList>
            <person name="Nakasone K."/>
            <person name="Takami H."/>
            <person name="Masui N."/>
            <person name="Takaki Y."/>
            <person name="Sasaki R."/>
            <person name="Maeno G."/>
            <person name="Sakiyama T."/>
            <person name="Hirama C."/>
            <person name="Fuji F."/>
            <person name="Horikoshi K."/>
        </authorList>
    </citation>
    <scope>NUCLEOTIDE SEQUENCE [GENOMIC DNA] OF 1-246</scope>
    <source>
        <strain>ATCC BAA-125 / DSM 18197 / FERM 7344 / JCM 9153 / C-125</strain>
    </source>
</reference>
<organism>
    <name type="scientific">Halalkalibacterium halodurans (strain ATCC BAA-125 / DSM 18197 / FERM 7344 / JCM 9153 / C-125)</name>
    <name type="common">Bacillus halodurans</name>
    <dbReference type="NCBI Taxonomy" id="272558"/>
    <lineage>
        <taxon>Bacteria</taxon>
        <taxon>Bacillati</taxon>
        <taxon>Bacillota</taxon>
        <taxon>Bacilli</taxon>
        <taxon>Bacillales</taxon>
        <taxon>Bacillaceae</taxon>
        <taxon>Halalkalibacterium (ex Joshi et al. 2022)</taxon>
    </lineage>
</organism>
<keyword id="KW-0021">Allosteric enzyme</keyword>
<keyword id="KW-0067">ATP-binding</keyword>
<keyword id="KW-0418">Kinase</keyword>
<keyword id="KW-0547">Nucleotide-binding</keyword>
<keyword id="KW-1185">Reference proteome</keyword>
<keyword id="KW-0808">Transferase</keyword>
<dbReference type="EC" id="2.7.14.1" evidence="1"/>
<dbReference type="EMBL" id="BA000004">
    <property type="protein sequence ID" value="BAB03821.1"/>
    <property type="molecule type" value="Genomic_DNA"/>
</dbReference>
<dbReference type="EMBL" id="AB031211">
    <property type="protein sequence ID" value="BAA90848.1"/>
    <property type="molecule type" value="Genomic_DNA"/>
</dbReference>
<dbReference type="PIR" id="F83662">
    <property type="entry name" value="F83662"/>
</dbReference>
<dbReference type="RefSeq" id="WP_010896285.1">
    <property type="nucleotide sequence ID" value="NC_002570.2"/>
</dbReference>
<dbReference type="SMR" id="Q9KGG3"/>
<dbReference type="STRING" id="272558.gene:10725942"/>
<dbReference type="KEGG" id="bha:BH0102"/>
<dbReference type="eggNOG" id="COG3869">
    <property type="taxonomic scope" value="Bacteria"/>
</dbReference>
<dbReference type="HOGENOM" id="CLU_066591_1_0_9"/>
<dbReference type="OrthoDB" id="9791353at2"/>
<dbReference type="Proteomes" id="UP000001258">
    <property type="component" value="Chromosome"/>
</dbReference>
<dbReference type="GO" id="GO:0005615">
    <property type="term" value="C:extracellular space"/>
    <property type="evidence" value="ECO:0007669"/>
    <property type="project" value="TreeGrafter"/>
</dbReference>
<dbReference type="GO" id="GO:0005524">
    <property type="term" value="F:ATP binding"/>
    <property type="evidence" value="ECO:0007669"/>
    <property type="project" value="UniProtKB-KW"/>
</dbReference>
<dbReference type="GO" id="GO:0004111">
    <property type="term" value="F:creatine kinase activity"/>
    <property type="evidence" value="ECO:0007669"/>
    <property type="project" value="InterPro"/>
</dbReference>
<dbReference type="GO" id="GO:0004672">
    <property type="term" value="F:protein kinase activity"/>
    <property type="evidence" value="ECO:0007669"/>
    <property type="project" value="UniProtKB-UniRule"/>
</dbReference>
<dbReference type="GO" id="GO:0046314">
    <property type="term" value="P:phosphocreatine biosynthetic process"/>
    <property type="evidence" value="ECO:0007669"/>
    <property type="project" value="InterPro"/>
</dbReference>
<dbReference type="CDD" id="cd07930">
    <property type="entry name" value="bacterial_phosphagen_kinase"/>
    <property type="match status" value="1"/>
</dbReference>
<dbReference type="FunFam" id="3.30.590.10:FF:000007">
    <property type="entry name" value="Protein-arginine kinase"/>
    <property type="match status" value="1"/>
</dbReference>
<dbReference type="Gene3D" id="3.30.590.10">
    <property type="entry name" value="Glutamine synthetase/guanido kinase, catalytic domain"/>
    <property type="match status" value="1"/>
</dbReference>
<dbReference type="HAMAP" id="MF_00602">
    <property type="entry name" value="Prot_Arg_kinase"/>
    <property type="match status" value="1"/>
</dbReference>
<dbReference type="InterPro" id="IPR023660">
    <property type="entry name" value="Arg_Kinase"/>
</dbReference>
<dbReference type="InterPro" id="IPR000749">
    <property type="entry name" value="ATP-guanido_PTrfase"/>
</dbReference>
<dbReference type="InterPro" id="IPR022415">
    <property type="entry name" value="ATP-guanido_PTrfase_AS"/>
</dbReference>
<dbReference type="InterPro" id="IPR022414">
    <property type="entry name" value="ATP-guanido_PTrfase_cat"/>
</dbReference>
<dbReference type="InterPro" id="IPR014746">
    <property type="entry name" value="Gln_synth/guanido_kin_cat_dom"/>
</dbReference>
<dbReference type="NCBIfam" id="NF002194">
    <property type="entry name" value="PRK01059.1-4"/>
    <property type="match status" value="1"/>
</dbReference>
<dbReference type="NCBIfam" id="NF002195">
    <property type="entry name" value="PRK01059.1-5"/>
    <property type="match status" value="1"/>
</dbReference>
<dbReference type="PANTHER" id="PTHR11547:SF38">
    <property type="entry name" value="ARGININE KINASE 1-RELATED"/>
    <property type="match status" value="1"/>
</dbReference>
<dbReference type="PANTHER" id="PTHR11547">
    <property type="entry name" value="ARGININE OR CREATINE KINASE"/>
    <property type="match status" value="1"/>
</dbReference>
<dbReference type="Pfam" id="PF00217">
    <property type="entry name" value="ATP-gua_Ptrans"/>
    <property type="match status" value="1"/>
</dbReference>
<dbReference type="SUPFAM" id="SSF55931">
    <property type="entry name" value="Glutamine synthetase/guanido kinase"/>
    <property type="match status" value="1"/>
</dbReference>
<dbReference type="PROSITE" id="PS00112">
    <property type="entry name" value="PHOSPHAGEN_KINASE"/>
    <property type="match status" value="1"/>
</dbReference>
<dbReference type="PROSITE" id="PS51510">
    <property type="entry name" value="PHOSPHAGEN_KINASE_C"/>
    <property type="match status" value="1"/>
</dbReference>
<feature type="chain" id="PRO_0000212015" description="Protein-arginine kinase">
    <location>
        <begin position="1"/>
        <end position="356"/>
    </location>
</feature>
<feature type="domain" description="Phosphagen kinase C-terminal" evidence="1">
    <location>
        <begin position="24"/>
        <end position="254"/>
    </location>
</feature>
<feature type="short sequence motif" description="RDXXRA motif of the pArg binding pocket involved in allosteric regulation" evidence="1">
    <location>
        <begin position="337"/>
        <end position="342"/>
    </location>
</feature>
<feature type="binding site" evidence="1">
    <location>
        <begin position="27"/>
        <end position="31"/>
    </location>
    <ligand>
        <name>ATP</name>
        <dbReference type="ChEBI" id="CHEBI:30616"/>
    </ligand>
</feature>
<feature type="binding site" evidence="1">
    <location>
        <position position="91"/>
    </location>
    <ligand>
        <name>ATP</name>
        <dbReference type="ChEBI" id="CHEBI:30616"/>
    </ligand>
</feature>
<feature type="binding site" evidence="1">
    <location>
        <position position="125"/>
    </location>
    <ligand>
        <name>ATP</name>
        <dbReference type="ChEBI" id="CHEBI:30616"/>
    </ligand>
</feature>
<feature type="binding site" evidence="1">
    <location>
        <begin position="176"/>
        <end position="180"/>
    </location>
    <ligand>
        <name>ATP</name>
        <dbReference type="ChEBI" id="CHEBI:30616"/>
    </ligand>
</feature>
<feature type="binding site" evidence="1">
    <location>
        <begin position="207"/>
        <end position="212"/>
    </location>
    <ligand>
        <name>ATP</name>
        <dbReference type="ChEBI" id="CHEBI:30616"/>
    </ligand>
</feature>
<proteinExistence type="inferred from homology"/>
<accession>Q9KGG3</accession>
<accession>Q9LC98</accession>
<protein>
    <recommendedName>
        <fullName evidence="1">Protein-arginine kinase</fullName>
        <ecNumber evidence="1">2.7.14.1</ecNumber>
    </recommendedName>
</protein>
<gene>
    <name evidence="1" type="primary">mcsB</name>
    <name type="ordered locus">BH0102</name>
</gene>
<name>MCSB_HALH5</name>
<sequence length="356" mass="40171">MSLQRFISEAISPWMKKDGPDSDIVLSSRIRLARNLQSFRFPLLATIEESKQLVEHVKHHLAESSYHTNRFELLCMDDMKPNVKRVLVEKHLISPHLAEESKHGAVMLSEDESISIMINEEDHLRIQCLFPGFQLSEALVLASGIDDWIEGKVDYAFDEKRGYLTSCPTNVGTGLRASVMMHLPALVMTQQINRILPAINQLGLVVRGIYGEGSEALGNLFQISNQMTLGKSEEDIVEDLRGVVMQLIQQERAARKRLLESSRLQLEDRVYRSYGILAHSRIIESKEATQKLSDVRLGIDLGLLKGVSGNILNELMILTQPGFLQQYAGTVLTADQRDERRAALIRARLKLEDESN</sequence>
<evidence type="ECO:0000255" key="1">
    <source>
        <dbReference type="HAMAP-Rule" id="MF_00602"/>
    </source>
</evidence>
<comment type="function">
    <text evidence="1">Catalyzes the specific phosphorylation of arginine residues in a large number of proteins. Is part of the bacterial stress response system. Protein arginine phosphorylation has a physiologically important role and is involved in the regulation of many critical cellular processes, such as protein homeostasis, motility, competence, and stringent and stress responses, by regulating gene expression and protein activity.</text>
</comment>
<comment type="catalytic activity">
    <reaction evidence="1">
        <text>L-arginyl-[protein] + ATP = N(omega)-phospho-L-arginyl-[protein] + ADP + H(+)</text>
        <dbReference type="Rhea" id="RHEA:43384"/>
        <dbReference type="Rhea" id="RHEA-COMP:10532"/>
        <dbReference type="Rhea" id="RHEA-COMP:10533"/>
        <dbReference type="ChEBI" id="CHEBI:15378"/>
        <dbReference type="ChEBI" id="CHEBI:29965"/>
        <dbReference type="ChEBI" id="CHEBI:30616"/>
        <dbReference type="ChEBI" id="CHEBI:83226"/>
        <dbReference type="ChEBI" id="CHEBI:456216"/>
        <dbReference type="EC" id="2.7.14.1"/>
    </reaction>
</comment>
<comment type="activity regulation">
    <text evidence="1">Appears to be allosterically activated by the binding of pArg-containing polypeptides to the pArg-binding pocket localized in the C-terminal domain of McsB.</text>
</comment>
<comment type="similarity">
    <text evidence="1">Belongs to the ATP:guanido phosphotransferase family.</text>
</comment>